<name>XERC_ECOBW</name>
<accession>C4ZZ74</accession>
<reference key="1">
    <citation type="journal article" date="2009" name="J. Bacteriol.">
        <title>Genomic sequencing reveals regulatory mutations and recombinational events in the widely used MC4100 lineage of Escherichia coli K-12.</title>
        <authorList>
            <person name="Ferenci T."/>
            <person name="Zhou Z."/>
            <person name="Betteridge T."/>
            <person name="Ren Y."/>
            <person name="Liu Y."/>
            <person name="Feng L."/>
            <person name="Reeves P.R."/>
            <person name="Wang L."/>
        </authorList>
    </citation>
    <scope>NUCLEOTIDE SEQUENCE [LARGE SCALE GENOMIC DNA]</scope>
    <source>
        <strain>K12 / MC4100 / BW2952</strain>
    </source>
</reference>
<protein>
    <recommendedName>
        <fullName evidence="1">Tyrosine recombinase XerC</fullName>
    </recommendedName>
</protein>
<sequence>MTDLHTDVERYLRYLSVERQLSPITLLNYQRQLEAIINFASENGLQSWQQCDVTMVRNFAVRSRRKGLGAASLALRLSALRSFFDWLVSQNELKANPAKGVSAPKAPRHLPKNIDVDDMNRLLDIDINDPLAVRDRAMLEVMYGAGLRLSELVGLDIKHLDLESGEVWVMGKGSKERRLPIGRNAVAWIEHWLDLRDLFGSEDDALFLSKLGKRISARNVQKRFAEWGIKQGLNNHVHPHKLRHSFATHMLESSGDLRGVQELLGHANLSTTQIYTHLDFQHLASVYDAAHPRAKRGK</sequence>
<gene>
    <name evidence="1" type="primary">xerC</name>
    <name type="ordered locus">BWG_3490</name>
</gene>
<dbReference type="EMBL" id="CP001396">
    <property type="protein sequence ID" value="ACR65556.1"/>
    <property type="molecule type" value="Genomic_DNA"/>
</dbReference>
<dbReference type="RefSeq" id="WP_000130691.1">
    <property type="nucleotide sequence ID" value="NC_012759.1"/>
</dbReference>
<dbReference type="SMR" id="C4ZZ74"/>
<dbReference type="GeneID" id="75059707"/>
<dbReference type="KEGG" id="ebw:BWG_3490"/>
<dbReference type="HOGENOM" id="CLU_027562_9_0_6"/>
<dbReference type="GO" id="GO:0005737">
    <property type="term" value="C:cytoplasm"/>
    <property type="evidence" value="ECO:0007669"/>
    <property type="project" value="UniProtKB-SubCell"/>
</dbReference>
<dbReference type="GO" id="GO:0003677">
    <property type="term" value="F:DNA binding"/>
    <property type="evidence" value="ECO:0007669"/>
    <property type="project" value="UniProtKB-KW"/>
</dbReference>
<dbReference type="GO" id="GO:0009037">
    <property type="term" value="F:tyrosine-based site-specific recombinase activity"/>
    <property type="evidence" value="ECO:0007669"/>
    <property type="project" value="UniProtKB-UniRule"/>
</dbReference>
<dbReference type="GO" id="GO:0051301">
    <property type="term" value="P:cell division"/>
    <property type="evidence" value="ECO:0007669"/>
    <property type="project" value="UniProtKB-KW"/>
</dbReference>
<dbReference type="GO" id="GO:0007059">
    <property type="term" value="P:chromosome segregation"/>
    <property type="evidence" value="ECO:0007669"/>
    <property type="project" value="UniProtKB-UniRule"/>
</dbReference>
<dbReference type="GO" id="GO:0006313">
    <property type="term" value="P:DNA transposition"/>
    <property type="evidence" value="ECO:0007669"/>
    <property type="project" value="UniProtKB-UniRule"/>
</dbReference>
<dbReference type="CDD" id="cd00798">
    <property type="entry name" value="INT_XerDC_C"/>
    <property type="match status" value="1"/>
</dbReference>
<dbReference type="FunFam" id="1.10.443.10:FF:000002">
    <property type="entry name" value="Tyrosine recombinase XerC"/>
    <property type="match status" value="1"/>
</dbReference>
<dbReference type="Gene3D" id="1.10.150.130">
    <property type="match status" value="1"/>
</dbReference>
<dbReference type="Gene3D" id="1.10.443.10">
    <property type="entry name" value="Intergrase catalytic core"/>
    <property type="match status" value="1"/>
</dbReference>
<dbReference type="HAMAP" id="MF_01808">
    <property type="entry name" value="Recomb_XerC_XerD"/>
    <property type="match status" value="1"/>
</dbReference>
<dbReference type="InterPro" id="IPR044068">
    <property type="entry name" value="CB"/>
</dbReference>
<dbReference type="InterPro" id="IPR011010">
    <property type="entry name" value="DNA_brk_join_enz"/>
</dbReference>
<dbReference type="InterPro" id="IPR013762">
    <property type="entry name" value="Integrase-like_cat_sf"/>
</dbReference>
<dbReference type="InterPro" id="IPR002104">
    <property type="entry name" value="Integrase_catalytic"/>
</dbReference>
<dbReference type="InterPro" id="IPR010998">
    <property type="entry name" value="Integrase_recombinase_N"/>
</dbReference>
<dbReference type="InterPro" id="IPR004107">
    <property type="entry name" value="Integrase_SAM-like_N"/>
</dbReference>
<dbReference type="InterPro" id="IPR011931">
    <property type="entry name" value="Recomb_XerC"/>
</dbReference>
<dbReference type="InterPro" id="IPR023009">
    <property type="entry name" value="Tyrosine_recombinase_XerC/XerD"/>
</dbReference>
<dbReference type="InterPro" id="IPR050090">
    <property type="entry name" value="Tyrosine_recombinase_XerCD"/>
</dbReference>
<dbReference type="NCBIfam" id="NF001399">
    <property type="entry name" value="PRK00283.1"/>
    <property type="match status" value="1"/>
</dbReference>
<dbReference type="NCBIfam" id="TIGR02224">
    <property type="entry name" value="recomb_XerC"/>
    <property type="match status" value="1"/>
</dbReference>
<dbReference type="PANTHER" id="PTHR30349">
    <property type="entry name" value="PHAGE INTEGRASE-RELATED"/>
    <property type="match status" value="1"/>
</dbReference>
<dbReference type="PANTHER" id="PTHR30349:SF81">
    <property type="entry name" value="TYROSINE RECOMBINASE XERC"/>
    <property type="match status" value="1"/>
</dbReference>
<dbReference type="Pfam" id="PF02899">
    <property type="entry name" value="Phage_int_SAM_1"/>
    <property type="match status" value="1"/>
</dbReference>
<dbReference type="Pfam" id="PF00589">
    <property type="entry name" value="Phage_integrase"/>
    <property type="match status" value="1"/>
</dbReference>
<dbReference type="SUPFAM" id="SSF56349">
    <property type="entry name" value="DNA breaking-rejoining enzymes"/>
    <property type="match status" value="1"/>
</dbReference>
<dbReference type="SUPFAM" id="SSF47823">
    <property type="entry name" value="lambda integrase-like, N-terminal domain"/>
    <property type="match status" value="1"/>
</dbReference>
<dbReference type="PROSITE" id="PS51900">
    <property type="entry name" value="CB"/>
    <property type="match status" value="1"/>
</dbReference>
<dbReference type="PROSITE" id="PS51898">
    <property type="entry name" value="TYR_RECOMBINASE"/>
    <property type="match status" value="1"/>
</dbReference>
<feature type="chain" id="PRO_1000215951" description="Tyrosine recombinase XerC">
    <location>
        <begin position="1"/>
        <end position="298"/>
    </location>
</feature>
<feature type="domain" description="Core-binding (CB)" evidence="3">
    <location>
        <begin position="2"/>
        <end position="88"/>
    </location>
</feature>
<feature type="domain" description="Tyr recombinase" evidence="2">
    <location>
        <begin position="109"/>
        <end position="288"/>
    </location>
</feature>
<feature type="active site" evidence="1">
    <location>
        <position position="148"/>
    </location>
</feature>
<feature type="active site" evidence="1">
    <location>
        <position position="172"/>
    </location>
</feature>
<feature type="active site" evidence="1">
    <location>
        <position position="240"/>
    </location>
</feature>
<feature type="active site" evidence="1">
    <location>
        <position position="243"/>
    </location>
</feature>
<feature type="active site" evidence="1">
    <location>
        <position position="266"/>
    </location>
</feature>
<feature type="active site" description="O-(3'-phospho-DNA)-tyrosine intermediate" evidence="1">
    <location>
        <position position="275"/>
    </location>
</feature>
<proteinExistence type="inferred from homology"/>
<evidence type="ECO:0000255" key="1">
    <source>
        <dbReference type="HAMAP-Rule" id="MF_01808"/>
    </source>
</evidence>
<evidence type="ECO:0000255" key="2">
    <source>
        <dbReference type="PROSITE-ProRule" id="PRU01246"/>
    </source>
</evidence>
<evidence type="ECO:0000255" key="3">
    <source>
        <dbReference type="PROSITE-ProRule" id="PRU01248"/>
    </source>
</evidence>
<organism>
    <name type="scientific">Escherichia coli (strain K12 / MC4100 / BW2952)</name>
    <dbReference type="NCBI Taxonomy" id="595496"/>
    <lineage>
        <taxon>Bacteria</taxon>
        <taxon>Pseudomonadati</taxon>
        <taxon>Pseudomonadota</taxon>
        <taxon>Gammaproteobacteria</taxon>
        <taxon>Enterobacterales</taxon>
        <taxon>Enterobacteriaceae</taxon>
        <taxon>Escherichia</taxon>
    </lineage>
</organism>
<keyword id="KW-0131">Cell cycle</keyword>
<keyword id="KW-0132">Cell division</keyword>
<keyword id="KW-0159">Chromosome partition</keyword>
<keyword id="KW-0963">Cytoplasm</keyword>
<keyword id="KW-0229">DNA integration</keyword>
<keyword id="KW-0233">DNA recombination</keyword>
<keyword id="KW-0238">DNA-binding</keyword>
<comment type="function">
    <text evidence="1">Site-specific tyrosine recombinase, which acts by catalyzing the cutting and rejoining of the recombining DNA molecules. Binds cooperatively to specific DNA consensus sequences that are separated from XerD binding sites by a short central region, forming the heterotetrameric XerC-XerD complex that recombines DNA substrates. The complex is essential to convert dimers of the bacterial chromosome into monomers to permit their segregation at cell division. It also contributes to the segregational stability of plasmids. In the complex XerC specifically exchanges the top DNA strands.</text>
</comment>
<comment type="activity regulation">
    <text evidence="1">FtsK may regulate the catalytic switch between XerC and XerD in the heterotetrameric complex during the two steps of the recombination process.</text>
</comment>
<comment type="subunit">
    <text evidence="1">Forms a cyclic heterotetrameric complex composed of two molecules of XerC and two molecules of XerD, in which XerC interacts with XerD via its C-terminal region, XerD interacts with XerC via its C-terminal region and so on.</text>
</comment>
<comment type="subcellular location">
    <subcellularLocation>
        <location evidence="1">Cytoplasm</location>
    </subcellularLocation>
</comment>
<comment type="similarity">
    <text evidence="1">Belongs to the 'phage' integrase family. XerC subfamily.</text>
</comment>